<feature type="chain" id="PRO_0000383703" description="Probable cytosolic Fe-S cluster assembly factor GI11683">
    <location>
        <begin position="1"/>
        <end position="476"/>
    </location>
</feature>
<feature type="binding site" evidence="2">
    <location>
        <position position="23"/>
    </location>
    <ligand>
        <name>[4Fe-4S] cluster</name>
        <dbReference type="ChEBI" id="CHEBI:49883"/>
        <label>1</label>
    </ligand>
</feature>
<feature type="binding site" evidence="2">
    <location>
        <position position="68"/>
    </location>
    <ligand>
        <name>[4Fe-4S] cluster</name>
        <dbReference type="ChEBI" id="CHEBI:49883"/>
        <label>1</label>
    </ligand>
</feature>
<feature type="binding site" evidence="2">
    <location>
        <position position="71"/>
    </location>
    <ligand>
        <name>[4Fe-4S] cluster</name>
        <dbReference type="ChEBI" id="CHEBI:49883"/>
        <label>1</label>
    </ligand>
</feature>
<feature type="binding site" evidence="2">
    <location>
        <position position="74"/>
    </location>
    <ligand>
        <name>[4Fe-4S] cluster</name>
        <dbReference type="ChEBI" id="CHEBI:49883"/>
        <label>1</label>
    </ligand>
</feature>
<feature type="binding site" evidence="2">
    <location>
        <position position="187"/>
    </location>
    <ligand>
        <name>[4Fe-4S] cluster</name>
        <dbReference type="ChEBI" id="CHEBI:49883"/>
        <label>2</label>
    </ligand>
</feature>
<feature type="binding site" evidence="2">
    <location>
        <position position="243"/>
    </location>
    <ligand>
        <name>[4Fe-4S] cluster</name>
        <dbReference type="ChEBI" id="CHEBI:49883"/>
        <label>2</label>
    </ligand>
</feature>
<feature type="binding site" evidence="2">
    <location>
        <position position="395"/>
    </location>
    <ligand>
        <name>[4Fe-4S] cluster</name>
        <dbReference type="ChEBI" id="CHEBI:49883"/>
        <label>2</label>
    </ligand>
</feature>
<feature type="binding site" evidence="2">
    <location>
        <position position="399"/>
    </location>
    <ligand>
        <name>[4Fe-4S] cluster</name>
        <dbReference type="ChEBI" id="CHEBI:49883"/>
        <label>2</label>
    </ligand>
</feature>
<accession>B4KFU7</accession>
<evidence type="ECO:0000250" key="1"/>
<evidence type="ECO:0000255" key="2"/>
<evidence type="ECO:0000305" key="3"/>
<sequence length="476" mass="53707">MSRFSGALQLTDLDDFITPSQECIKPVTIDKTKSKTGSKITVQADGYYEESESGKQKLQKVEITLQDCLACSGCITSAEGVLITQQSQEELLKVLRENERLKASGDSDKVRTIVFTIAVQPLISLAHRFELGVEEAARHLSGYLRQLGADYVLSTKIADDLALLECRQEFVERYRDNADLSMLSSSCPGWVCYAEKTHGNFILPHIATTRSPQQIMGVLVKQRLAEKLGVSGSRIYHVTVMPCYDKKLEASREDFYSEVNSSRDVDCVITSIEVEQMLQTEEQTLQQFAPSDMDWPWTDQPPEAMVWAHESTMSGGYAEHIYKYAARELFNEETPNELQFKALRNRDFSEISLEKDGKIVLKFAIANGFRNIQNLMQKLKRGKGPGYHFVEVMACPSGCINGGAQVRPTTGQHVRELTQQLEELYKQLPRSNPDNAHTKHIYTDFLDGTQTDKSQSLLHTSYHAVEKLNTALNIKW</sequence>
<reference key="1">
    <citation type="journal article" date="2007" name="Nature">
        <title>Evolution of genes and genomes on the Drosophila phylogeny.</title>
        <authorList>
            <consortium name="Drosophila 12 genomes consortium"/>
        </authorList>
    </citation>
    <scope>NUCLEOTIDE SEQUENCE [LARGE SCALE GENOMIC DNA]</scope>
    <source>
        <strain>Tucson 15081-1352.22</strain>
    </source>
</reference>
<comment type="function">
    <text evidence="1">Component of the cytosolic iron-sulfur (Fe/S) protein assembly machinery. Required for maturation of extramitochondrial Fe/S proteins (By similarity).</text>
</comment>
<comment type="similarity">
    <text evidence="3">Belongs to the NARF family.</text>
</comment>
<dbReference type="EMBL" id="CH933807">
    <property type="protein sequence ID" value="EDW12073.1"/>
    <property type="molecule type" value="Genomic_DNA"/>
</dbReference>
<dbReference type="SMR" id="B4KFU7"/>
<dbReference type="FunCoup" id="B4KFU7">
    <property type="interactions" value="492"/>
</dbReference>
<dbReference type="EnsemblMetazoa" id="FBtr0162408">
    <property type="protein sequence ID" value="FBpp0160900"/>
    <property type="gene ID" value="FBgn0134442"/>
</dbReference>
<dbReference type="EnsemblMetazoa" id="XM_002002595.4">
    <property type="protein sequence ID" value="XP_002002631.1"/>
    <property type="gene ID" value="LOC6576643"/>
</dbReference>
<dbReference type="GeneID" id="6576643"/>
<dbReference type="KEGG" id="dmo:Dmoj_GI11683"/>
<dbReference type="eggNOG" id="KOG2439">
    <property type="taxonomic scope" value="Eukaryota"/>
</dbReference>
<dbReference type="HOGENOM" id="CLU_018240_0_0_1"/>
<dbReference type="InParanoid" id="B4KFU7"/>
<dbReference type="OMA" id="GYLHHVL"/>
<dbReference type="OrthoDB" id="10253113at2759"/>
<dbReference type="PhylomeDB" id="B4KFU7"/>
<dbReference type="Proteomes" id="UP000009192">
    <property type="component" value="Unassembled WGS sequence"/>
</dbReference>
<dbReference type="GO" id="GO:0051539">
    <property type="term" value="F:4 iron, 4 sulfur cluster binding"/>
    <property type="evidence" value="ECO:0007669"/>
    <property type="project" value="UniProtKB-KW"/>
</dbReference>
<dbReference type="GO" id="GO:0046872">
    <property type="term" value="F:metal ion binding"/>
    <property type="evidence" value="ECO:0007669"/>
    <property type="project" value="UniProtKB-KW"/>
</dbReference>
<dbReference type="GO" id="GO:0016226">
    <property type="term" value="P:iron-sulfur cluster assembly"/>
    <property type="evidence" value="ECO:0000250"/>
    <property type="project" value="UniProtKB"/>
</dbReference>
<dbReference type="Gene3D" id="3.40.50.1780">
    <property type="match status" value="1"/>
</dbReference>
<dbReference type="Gene3D" id="3.40.950.10">
    <property type="entry name" value="Fe-only Hydrogenase (Larger Subunit), Chain L, domain 3"/>
    <property type="match status" value="1"/>
</dbReference>
<dbReference type="InterPro" id="IPR050340">
    <property type="entry name" value="Cytosolic_Fe-S_CAF"/>
</dbReference>
<dbReference type="InterPro" id="IPR009016">
    <property type="entry name" value="Fe_hydrogenase"/>
</dbReference>
<dbReference type="InterPro" id="IPR004108">
    <property type="entry name" value="Fe_hydrogenase_lsu_C"/>
</dbReference>
<dbReference type="InterPro" id="IPR003149">
    <property type="entry name" value="Fe_hydrogenase_ssu"/>
</dbReference>
<dbReference type="PANTHER" id="PTHR11615">
    <property type="entry name" value="NITRATE, FORMATE, IRON DEHYDROGENASE"/>
    <property type="match status" value="1"/>
</dbReference>
<dbReference type="Pfam" id="PF02906">
    <property type="entry name" value="Fe_hyd_lg_C"/>
    <property type="match status" value="1"/>
</dbReference>
<dbReference type="Pfam" id="PF02256">
    <property type="entry name" value="Fe_hyd_SSU"/>
    <property type="match status" value="1"/>
</dbReference>
<dbReference type="SMART" id="SM00902">
    <property type="entry name" value="Fe_hyd_SSU"/>
    <property type="match status" value="1"/>
</dbReference>
<dbReference type="SUPFAM" id="SSF53920">
    <property type="entry name" value="Fe-only hydrogenase"/>
    <property type="match status" value="1"/>
</dbReference>
<name>NARF_DROMO</name>
<proteinExistence type="inferred from homology"/>
<protein>
    <recommendedName>
        <fullName>Probable cytosolic Fe-S cluster assembly factor GI11683</fullName>
    </recommendedName>
</protein>
<organism>
    <name type="scientific">Drosophila mojavensis</name>
    <name type="common">Fruit fly</name>
    <dbReference type="NCBI Taxonomy" id="7230"/>
    <lineage>
        <taxon>Eukaryota</taxon>
        <taxon>Metazoa</taxon>
        <taxon>Ecdysozoa</taxon>
        <taxon>Arthropoda</taxon>
        <taxon>Hexapoda</taxon>
        <taxon>Insecta</taxon>
        <taxon>Pterygota</taxon>
        <taxon>Neoptera</taxon>
        <taxon>Endopterygota</taxon>
        <taxon>Diptera</taxon>
        <taxon>Brachycera</taxon>
        <taxon>Muscomorpha</taxon>
        <taxon>Ephydroidea</taxon>
        <taxon>Drosophilidae</taxon>
        <taxon>Drosophila</taxon>
    </lineage>
</organism>
<gene>
    <name type="ORF">GI11683</name>
</gene>
<keyword id="KW-0004">4Fe-4S</keyword>
<keyword id="KW-0408">Iron</keyword>
<keyword id="KW-0411">Iron-sulfur</keyword>
<keyword id="KW-0479">Metal-binding</keyword>
<keyword id="KW-1185">Reference proteome</keyword>